<reference key="1">
    <citation type="journal article" date="2003" name="Biochem. Biophys. Res. Commun.">
        <title>Identification of EloA-BP1, a novel Elongin A binding protein with an exonuclease homology domain.</title>
        <authorList>
            <person name="Tamura K."/>
            <person name="Miyata K."/>
            <person name="Sugahara K."/>
            <person name="Onishi S."/>
            <person name="Shuin T."/>
            <person name="Aso T."/>
        </authorList>
    </citation>
    <scope>NUCLEOTIDE SEQUENCE [MRNA]</scope>
    <scope>FUNCTION</scope>
    <scope>SUBCELLULAR LOCATION</scope>
    <scope>TISSUE SPECIFICITY</scope>
    <scope>INTERACTION WITH ELOA AND TCEA2</scope>
    <scope>VARIANT PRO-759</scope>
</reference>
<reference key="2">
    <citation type="journal article" date="1999" name="DNA Res.">
        <title>Characterization of cDNA clones selected by the GeneMark analysis from size-fractionated cDNA libraries from human brain.</title>
        <authorList>
            <person name="Hirosawa M."/>
            <person name="Nagase T."/>
            <person name="Ishikawa K."/>
            <person name="Kikuno R."/>
            <person name="Nomura N."/>
            <person name="Ohara O."/>
        </authorList>
    </citation>
    <scope>NUCLEOTIDE SEQUENCE [LARGE SCALE MRNA]</scope>
    <scope>VARIANT PRO-759</scope>
    <source>
        <tissue>Brain</tissue>
    </source>
</reference>
<reference key="3">
    <citation type="journal article" date="2004" name="Nature">
        <title>The DNA sequence and biology of human chromosome 19.</title>
        <authorList>
            <person name="Grimwood J."/>
            <person name="Gordon L.A."/>
            <person name="Olsen A.S."/>
            <person name="Terry A."/>
            <person name="Schmutz J."/>
            <person name="Lamerdin J.E."/>
            <person name="Hellsten U."/>
            <person name="Goodstein D."/>
            <person name="Couronne O."/>
            <person name="Tran-Gyamfi M."/>
            <person name="Aerts A."/>
            <person name="Altherr M."/>
            <person name="Ashworth L."/>
            <person name="Bajorek E."/>
            <person name="Black S."/>
            <person name="Branscomb E."/>
            <person name="Caenepeel S."/>
            <person name="Carrano A.V."/>
            <person name="Caoile C."/>
            <person name="Chan Y.M."/>
            <person name="Christensen M."/>
            <person name="Cleland C.A."/>
            <person name="Copeland A."/>
            <person name="Dalin E."/>
            <person name="Dehal P."/>
            <person name="Denys M."/>
            <person name="Detter J.C."/>
            <person name="Escobar J."/>
            <person name="Flowers D."/>
            <person name="Fotopulos D."/>
            <person name="Garcia C."/>
            <person name="Georgescu A.M."/>
            <person name="Glavina T."/>
            <person name="Gomez M."/>
            <person name="Gonzales E."/>
            <person name="Groza M."/>
            <person name="Hammon N."/>
            <person name="Hawkins T."/>
            <person name="Haydu L."/>
            <person name="Ho I."/>
            <person name="Huang W."/>
            <person name="Israni S."/>
            <person name="Jett J."/>
            <person name="Kadner K."/>
            <person name="Kimball H."/>
            <person name="Kobayashi A."/>
            <person name="Larionov V."/>
            <person name="Leem S.-H."/>
            <person name="Lopez F."/>
            <person name="Lou Y."/>
            <person name="Lowry S."/>
            <person name="Malfatti S."/>
            <person name="Martinez D."/>
            <person name="McCready P.M."/>
            <person name="Medina C."/>
            <person name="Morgan J."/>
            <person name="Nelson K."/>
            <person name="Nolan M."/>
            <person name="Ovcharenko I."/>
            <person name="Pitluck S."/>
            <person name="Pollard M."/>
            <person name="Popkie A.P."/>
            <person name="Predki P."/>
            <person name="Quan G."/>
            <person name="Ramirez L."/>
            <person name="Rash S."/>
            <person name="Retterer J."/>
            <person name="Rodriguez A."/>
            <person name="Rogers S."/>
            <person name="Salamov A."/>
            <person name="Salazar A."/>
            <person name="She X."/>
            <person name="Smith D."/>
            <person name="Slezak T."/>
            <person name="Solovyev V."/>
            <person name="Thayer N."/>
            <person name="Tice H."/>
            <person name="Tsai M."/>
            <person name="Ustaszewska A."/>
            <person name="Vo N."/>
            <person name="Wagner M."/>
            <person name="Wheeler J."/>
            <person name="Wu K."/>
            <person name="Xie G."/>
            <person name="Yang J."/>
            <person name="Dubchak I."/>
            <person name="Furey T.S."/>
            <person name="DeJong P."/>
            <person name="Dickson M."/>
            <person name="Gordon D."/>
            <person name="Eichler E.E."/>
            <person name="Pennacchio L.A."/>
            <person name="Richardson P."/>
            <person name="Stubbs L."/>
            <person name="Rokhsar D.S."/>
            <person name="Myers R.M."/>
            <person name="Rubin E.M."/>
            <person name="Lucas S.M."/>
        </authorList>
    </citation>
    <scope>NUCLEOTIDE SEQUENCE [LARGE SCALE GENOMIC DNA]</scope>
</reference>
<reference key="4">
    <citation type="journal article" date="2004" name="Genome Res.">
        <title>The status, quality, and expansion of the NIH full-length cDNA project: the Mammalian Gene Collection (MGC).</title>
        <authorList>
            <consortium name="The MGC Project Team"/>
        </authorList>
    </citation>
    <scope>NUCLEOTIDE SEQUENCE [LARGE SCALE MRNA]</scope>
    <scope>VARIANTS PRO-759 AND GLY-886</scope>
    <source>
        <tissue>Duodenum</tissue>
    </source>
</reference>
<reference key="5">
    <citation type="journal article" date="2008" name="J. Proteome Res.">
        <title>Combining protein-based IMAC, peptide-based IMAC, and MudPIT for efficient phosphoproteomic analysis.</title>
        <authorList>
            <person name="Cantin G.T."/>
            <person name="Yi W."/>
            <person name="Lu B."/>
            <person name="Park S.K."/>
            <person name="Xu T."/>
            <person name="Lee J.-D."/>
            <person name="Yates J.R. III"/>
        </authorList>
    </citation>
    <scope>PHOSPHORYLATION [LARGE SCALE ANALYSIS] AT SER-358</scope>
    <scope>IDENTIFICATION BY MASS SPECTROMETRY [LARGE SCALE ANALYSIS]</scope>
    <source>
        <tissue>Cervix carcinoma</tissue>
    </source>
</reference>
<reference key="6">
    <citation type="journal article" date="2011" name="Sci. Signal.">
        <title>System-wide temporal characterization of the proteome and phosphoproteome of human embryonic stem cell differentiation.</title>
        <authorList>
            <person name="Rigbolt K.T."/>
            <person name="Prokhorova T.A."/>
            <person name="Akimov V."/>
            <person name="Henningsen J."/>
            <person name="Johansen P.T."/>
            <person name="Kratchmarova I."/>
            <person name="Kassem M."/>
            <person name="Mann M."/>
            <person name="Olsen J.V."/>
            <person name="Blagoev B."/>
        </authorList>
    </citation>
    <scope>IDENTIFICATION BY MASS SPECTROMETRY [LARGE SCALE ANALYSIS]</scope>
</reference>
<reference key="7">
    <citation type="journal article" date="2013" name="J. Proteome Res.">
        <title>Toward a comprehensive characterization of a human cancer cell phosphoproteome.</title>
        <authorList>
            <person name="Zhou H."/>
            <person name="Di Palma S."/>
            <person name="Preisinger C."/>
            <person name="Peng M."/>
            <person name="Polat A.N."/>
            <person name="Heck A.J."/>
            <person name="Mohammed S."/>
        </authorList>
    </citation>
    <scope>PHOSPHORYLATION [LARGE SCALE ANALYSIS] AT SER-459; SER-499; SER-610 AND SER-914</scope>
    <scope>IDENTIFICATION BY MASS SPECTROMETRY [LARGE SCALE ANALYSIS]</scope>
    <source>
        <tissue>Cervix carcinoma</tissue>
        <tissue>Erythroleukemia</tissue>
    </source>
</reference>
<reference key="8">
    <citation type="journal article" date="2014" name="Mol. Cell. Proteomics">
        <title>Immunoaffinity enrichment and mass spectrometry analysis of protein methylation.</title>
        <authorList>
            <person name="Guo A."/>
            <person name="Gu H."/>
            <person name="Zhou J."/>
            <person name="Mulhern D."/>
            <person name="Wang Y."/>
            <person name="Lee K.A."/>
            <person name="Yang V."/>
            <person name="Aguiar M."/>
            <person name="Kornhauser J."/>
            <person name="Jia X."/>
            <person name="Ren J."/>
            <person name="Beausoleil S.A."/>
            <person name="Silva J.C."/>
            <person name="Vemulapalli V."/>
            <person name="Bedford M.T."/>
            <person name="Comb M.J."/>
        </authorList>
    </citation>
    <scope>METHYLATION [LARGE SCALE ANALYSIS] AT ARG-191</scope>
    <scope>IDENTIFICATION BY MASS SPECTROMETRY [LARGE SCALE ANALYSIS]</scope>
    <source>
        <tissue>Colon carcinoma</tissue>
    </source>
</reference>
<accession>Q8N1G1</accession>
<accession>Q9ULT2</accession>
<keyword id="KW-0175">Coiled coil</keyword>
<keyword id="KW-0269">Exonuclease</keyword>
<keyword id="KW-0378">Hydrolase</keyword>
<keyword id="KW-0488">Methylation</keyword>
<keyword id="KW-0540">Nuclease</keyword>
<keyword id="KW-0539">Nucleus</keyword>
<keyword id="KW-0597">Phosphoprotein</keyword>
<keyword id="KW-1267">Proteomics identification</keyword>
<keyword id="KW-1185">Reference proteome</keyword>
<sequence>MLRSTGFFRAIDCPYWSGAPGGPCRRPYCHFRHRGARGSGAPGDGGEAPPAAGLGYDPYNPELPKPPAQRENGTLGLGEEPRPDVLELELVNQAIEAVRSEVELEQRRYRELLETTREHRSAEAPALAPRGPNASPTVGPDEDAFPLAFDYSPGSHGLLSPDAGYQPTPLAAPAEPGSKYSLASLDRGQGRGGGGGGALEYVPKAVSQPRRHSRPVPSGKYVVDNSRPPTDLEYDPLSNYSARHLSRASSRDERAAKRPRGSRGSEPYTPAPKKLCDPFGSCDARFSDSEDEAATVPGNEPTTASTPKARADPEIKATGQPPSKEGLEAEGGGLRETKETAVQCDVGDLQPPPAKPASPAQVQSSQDGGCPKEGKPKKKKTGAPPAPSCKDGAQGKDKTKDKGRGRPVEKPRADKKGPQASSPRRKAERPEGTKKKPSSATPVATSGKGRPDRPARRPSPTSGDSRPAAGRGPPRPLQLPDRKSTKAPSGKLVERKARSLDEGASQDAPKLKKRALSHADLFGDESEDEAAGPGVPSVWPSALPSLSSDSDSDSDSSLGFPEAQGPPKRLKASPPPSPAPSSSSSSSSSTSSAGADVDYSALEKEVDFDSDPMEECLRIFNESTSVKTEDRGRLARQPPKEEKSEEKGLSGLTTLFPGQKRRISHLSKQGQEVEPPRRGPAVPPARPPTAQEVCYLRAQQAQRASASLLQAPARLAEKSPSVHISAPGEKRRIAHIPNPRLAAAPTGAKRTLAASGSQSSNGPEPGGQQLKTRTLSGMASKTTTTIIPKRIAHSPSLQSLKKPIIPKEFGGKVPTVIRQRYLNLFIEECLKFCTSNQEAIEKALNEEKVAYDRSPSKNIYLNVAVNTLKKLRGLAPSAVPGLSKTSGRRVVSHEVVLGGRLAAKTSFSLSRPSSPRVEDLKGAALYSRLREYLLTQDQLKENGYPFPHPERPGGAIIFTAEEKRPKDSSCRTCCRCGTEYLVSSSGRCIRDEECYYHWGRLRRNRVAGGWETQYMCCSAAAGSVGCQVAKQHVQDGRKERLEGFVKTFEKELSGDTHPGIYALDCEMSYTTYGLELTRVTVVDTDVHVVYDTFVKPDNEIVDYNTRFSGVTEADLADTSVTLRDVQAVLLSMFSADTILIGHSLESDLLALKVIHSTVVDTSVLFPHRLGLPYKRSLRNLMADYLRQIIQDNVDGHSSSEDAGACMHLVIWKVREDAKTKR</sequence>
<protein>
    <recommendedName>
        <fullName>RNA exonuclease 1 homolog</fullName>
        <ecNumber>3.1.-.-</ecNumber>
    </recommendedName>
    <alternativeName>
        <fullName>Elongin-A-binding protein 1</fullName>
        <shortName>EloA-BP1</shortName>
    </alternativeName>
    <alternativeName>
        <fullName>Transcription elongation factor B polypeptide 3-binding protein 1</fullName>
    </alternativeName>
</protein>
<comment type="function">
    <text evidence="5">Seems to have no detectable effect on transcription elongation in vitro.</text>
</comment>
<comment type="subunit">
    <text evidence="5">Interacts with TCEA2 and ELOA.</text>
</comment>
<comment type="subcellular location">
    <subcellularLocation>
        <location evidence="5">Nucleus</location>
    </subcellularLocation>
</comment>
<comment type="tissue specificity">
    <text evidence="5">Ubiquitously expressed.</text>
</comment>
<comment type="similarity">
    <text evidence="7">Belongs to the REXO1/REXO3 family.</text>
</comment>
<comment type="sequence caution" evidence="7">
    <conflict type="erroneous initiation">
        <sequence resource="EMBL-CDS" id="BAA86452"/>
    </conflict>
    <text>Extended N-terminus.</text>
</comment>
<feature type="chain" id="PRO_0000239232" description="RNA exonuclease 1 homolog">
    <location>
        <begin position="1"/>
        <end position="1221"/>
    </location>
</feature>
<feature type="domain" description="Exonuclease">
    <location>
        <begin position="1060"/>
        <end position="1209"/>
    </location>
</feature>
<feature type="region of interest" description="Disordered" evidence="3">
    <location>
        <begin position="37"/>
        <end position="75"/>
    </location>
</feature>
<feature type="region of interest" description="Disordered" evidence="3">
    <location>
        <begin position="116"/>
        <end position="598"/>
    </location>
</feature>
<feature type="region of interest" description="Interaction with ELOA" evidence="5">
    <location>
        <begin position="498"/>
        <end position="577"/>
    </location>
</feature>
<feature type="region of interest" description="Disordered" evidence="3">
    <location>
        <begin position="619"/>
        <end position="692"/>
    </location>
</feature>
<feature type="region of interest" description="Disordered" evidence="3">
    <location>
        <begin position="735"/>
        <end position="775"/>
    </location>
</feature>
<feature type="coiled-coil region" evidence="2">
    <location>
        <begin position="86"/>
        <end position="115"/>
    </location>
</feature>
<feature type="compositionally biased region" description="Gly residues" evidence="3">
    <location>
        <begin position="37"/>
        <end position="46"/>
    </location>
</feature>
<feature type="compositionally biased region" description="Low complexity" evidence="3">
    <location>
        <begin position="357"/>
        <end position="369"/>
    </location>
</feature>
<feature type="compositionally biased region" description="Basic and acidic residues" evidence="3">
    <location>
        <begin position="393"/>
        <end position="417"/>
    </location>
</feature>
<feature type="compositionally biased region" description="Basic and acidic residues" evidence="3">
    <location>
        <begin position="492"/>
        <end position="501"/>
    </location>
</feature>
<feature type="compositionally biased region" description="Low complexity" evidence="3">
    <location>
        <begin position="580"/>
        <end position="593"/>
    </location>
</feature>
<feature type="compositionally biased region" description="Basic and acidic residues" evidence="3">
    <location>
        <begin position="627"/>
        <end position="648"/>
    </location>
</feature>
<feature type="modified residue" description="Omega-N-methylarginine" evidence="10">
    <location>
        <position position="191"/>
    </location>
</feature>
<feature type="modified residue" description="Phosphoserine" evidence="1">
    <location>
        <position position="287"/>
    </location>
</feature>
<feature type="modified residue" description="Phosphoserine" evidence="1">
    <location>
        <position position="289"/>
    </location>
</feature>
<feature type="modified residue" description="Phosphoserine" evidence="8">
    <location>
        <position position="358"/>
    </location>
</feature>
<feature type="modified residue" description="Phosphoserine" evidence="9">
    <location>
        <position position="459"/>
    </location>
</feature>
<feature type="modified residue" description="Phosphoserine" evidence="9">
    <location>
        <position position="499"/>
    </location>
</feature>
<feature type="modified residue" description="Phosphoserine" evidence="1">
    <location>
        <position position="526"/>
    </location>
</feature>
<feature type="modified residue" description="Phosphoserine" evidence="9">
    <location>
        <position position="610"/>
    </location>
</feature>
<feature type="modified residue" description="Phosphoserine" evidence="9">
    <location>
        <position position="914"/>
    </location>
</feature>
<feature type="sequence variant" id="VAR_057148" description="In dbSNP:rs10415018.">
    <original>V</original>
    <variation>A</variation>
    <location>
        <position position="408"/>
    </location>
</feature>
<feature type="sequence variant" id="VAR_060444" description="In dbSNP:rs4807145." evidence="4 5 6">
    <original>S</original>
    <variation>P</variation>
    <location>
        <position position="759"/>
    </location>
</feature>
<feature type="sequence variant" id="VAR_057149" description="In dbSNP:rs34831403.">
    <original>I</original>
    <variation>V</variation>
    <location>
        <position position="804"/>
    </location>
</feature>
<feature type="sequence variant" id="VAR_026587" description="In dbSNP:rs2396359." evidence="6">
    <original>S</original>
    <variation>G</variation>
    <location>
        <position position="886"/>
    </location>
</feature>
<feature type="sequence conflict" description="In Ref. 2; BAA86452 and 4; AAH32244." evidence="7" ref="2 4">
    <original>S</original>
    <variation>P</variation>
    <location>
        <position position="39"/>
    </location>
</feature>
<name>REXO1_HUMAN</name>
<evidence type="ECO:0000250" key="1">
    <source>
        <dbReference type="UniProtKB" id="Q7TT28"/>
    </source>
</evidence>
<evidence type="ECO:0000255" key="2"/>
<evidence type="ECO:0000256" key="3">
    <source>
        <dbReference type="SAM" id="MobiDB-lite"/>
    </source>
</evidence>
<evidence type="ECO:0000269" key="4">
    <source>
    </source>
</evidence>
<evidence type="ECO:0000269" key="5">
    <source>
    </source>
</evidence>
<evidence type="ECO:0000269" key="6">
    <source>
    </source>
</evidence>
<evidence type="ECO:0000305" key="7"/>
<evidence type="ECO:0007744" key="8">
    <source>
    </source>
</evidence>
<evidence type="ECO:0007744" key="9">
    <source>
    </source>
</evidence>
<evidence type="ECO:0007744" key="10">
    <source>
    </source>
</evidence>
<dbReference type="EC" id="3.1.-.-"/>
<dbReference type="EMBL" id="AB032964">
    <property type="protein sequence ID" value="BAA86452.1"/>
    <property type="status" value="ALT_INIT"/>
    <property type="molecule type" value="mRNA"/>
</dbReference>
<dbReference type="EMBL" id="AC012615">
    <property type="status" value="NOT_ANNOTATED_CDS"/>
    <property type="molecule type" value="Genomic_DNA"/>
</dbReference>
<dbReference type="EMBL" id="BC032244">
    <property type="protein sequence ID" value="AAH32244.1"/>
    <property type="molecule type" value="mRNA"/>
</dbReference>
<dbReference type="CCDS" id="CCDS32866.1"/>
<dbReference type="RefSeq" id="NP_065746.3">
    <property type="nucleotide sequence ID" value="NM_020695.3"/>
</dbReference>
<dbReference type="SMR" id="Q8N1G1"/>
<dbReference type="BioGRID" id="121526">
    <property type="interactions" value="17"/>
</dbReference>
<dbReference type="FunCoup" id="Q8N1G1">
    <property type="interactions" value="3295"/>
</dbReference>
<dbReference type="IntAct" id="Q8N1G1">
    <property type="interactions" value="8"/>
</dbReference>
<dbReference type="STRING" id="9606.ENSP00000170168"/>
<dbReference type="GlyGen" id="Q8N1G1">
    <property type="glycosylation" value="8 sites, 1 N-linked glycan (1 site), 1 O-linked glycan (3 sites)"/>
</dbReference>
<dbReference type="iPTMnet" id="Q8N1G1"/>
<dbReference type="PhosphoSitePlus" id="Q8N1G1"/>
<dbReference type="BioMuta" id="REXO1"/>
<dbReference type="DMDM" id="296452990"/>
<dbReference type="jPOST" id="Q8N1G1"/>
<dbReference type="MassIVE" id="Q8N1G1"/>
<dbReference type="PaxDb" id="9606-ENSP00000170168"/>
<dbReference type="PeptideAtlas" id="Q8N1G1"/>
<dbReference type="ProteomicsDB" id="71599"/>
<dbReference type="Pumba" id="Q8N1G1"/>
<dbReference type="Antibodypedia" id="22810">
    <property type="antibodies" value="177 antibodies from 27 providers"/>
</dbReference>
<dbReference type="DNASU" id="57455"/>
<dbReference type="Ensembl" id="ENST00000170168.9">
    <property type="protein sequence ID" value="ENSP00000170168.3"/>
    <property type="gene ID" value="ENSG00000079313.15"/>
</dbReference>
<dbReference type="GeneID" id="57455"/>
<dbReference type="KEGG" id="hsa:57455"/>
<dbReference type="MANE-Select" id="ENST00000170168.9">
    <property type="protein sequence ID" value="ENSP00000170168.3"/>
    <property type="RefSeq nucleotide sequence ID" value="NM_020695.4"/>
    <property type="RefSeq protein sequence ID" value="NP_065746.3"/>
</dbReference>
<dbReference type="UCSC" id="uc002lua.5">
    <property type="organism name" value="human"/>
</dbReference>
<dbReference type="AGR" id="HGNC:24616"/>
<dbReference type="CTD" id="57455"/>
<dbReference type="DisGeNET" id="57455"/>
<dbReference type="GeneCards" id="REXO1"/>
<dbReference type="HGNC" id="HGNC:24616">
    <property type="gene designation" value="REXO1"/>
</dbReference>
<dbReference type="HPA" id="ENSG00000079313">
    <property type="expression patterns" value="Low tissue specificity"/>
</dbReference>
<dbReference type="MIM" id="609614">
    <property type="type" value="gene"/>
</dbReference>
<dbReference type="neXtProt" id="NX_Q8N1G1"/>
<dbReference type="OpenTargets" id="ENSG00000079313"/>
<dbReference type="PharmGKB" id="PA142671077"/>
<dbReference type="VEuPathDB" id="HostDB:ENSG00000079313"/>
<dbReference type="eggNOG" id="KOG2248">
    <property type="taxonomic scope" value="Eukaryota"/>
</dbReference>
<dbReference type="GeneTree" id="ENSGT00940000158590"/>
<dbReference type="HOGENOM" id="CLU_006810_2_1_1"/>
<dbReference type="InParanoid" id="Q8N1G1"/>
<dbReference type="OMA" id="NIRMQYY"/>
<dbReference type="OrthoDB" id="206335at2759"/>
<dbReference type="PAN-GO" id="Q8N1G1">
    <property type="GO annotations" value="2 GO annotations based on evolutionary models"/>
</dbReference>
<dbReference type="PhylomeDB" id="Q8N1G1"/>
<dbReference type="TreeFam" id="TF350172"/>
<dbReference type="PathwayCommons" id="Q8N1G1"/>
<dbReference type="SignaLink" id="Q8N1G1"/>
<dbReference type="BioGRID-ORCS" id="57455">
    <property type="hits" value="74 hits in 1160 CRISPR screens"/>
</dbReference>
<dbReference type="ChiTaRS" id="REXO1">
    <property type="organism name" value="human"/>
</dbReference>
<dbReference type="GenomeRNAi" id="57455"/>
<dbReference type="Pharos" id="Q8N1G1">
    <property type="development level" value="Tdark"/>
</dbReference>
<dbReference type="PRO" id="PR:Q8N1G1"/>
<dbReference type="Proteomes" id="UP000005640">
    <property type="component" value="Chromosome 19"/>
</dbReference>
<dbReference type="RNAct" id="Q8N1G1">
    <property type="molecule type" value="protein"/>
</dbReference>
<dbReference type="Bgee" id="ENSG00000079313">
    <property type="expression patterns" value="Expressed in right testis and 101 other cell types or tissues"/>
</dbReference>
<dbReference type="ExpressionAtlas" id="Q8N1G1">
    <property type="expression patterns" value="baseline and differential"/>
</dbReference>
<dbReference type="GO" id="GO:0016604">
    <property type="term" value="C:nuclear body"/>
    <property type="evidence" value="ECO:0000314"/>
    <property type="project" value="HPA"/>
</dbReference>
<dbReference type="GO" id="GO:0005654">
    <property type="term" value="C:nucleoplasm"/>
    <property type="evidence" value="ECO:0000314"/>
    <property type="project" value="HPA"/>
</dbReference>
<dbReference type="GO" id="GO:0005634">
    <property type="term" value="C:nucleus"/>
    <property type="evidence" value="ECO:0000318"/>
    <property type="project" value="GO_Central"/>
</dbReference>
<dbReference type="GO" id="GO:0004527">
    <property type="term" value="F:exonuclease activity"/>
    <property type="evidence" value="ECO:0000318"/>
    <property type="project" value="GO_Central"/>
</dbReference>
<dbReference type="GO" id="GO:0003676">
    <property type="term" value="F:nucleic acid binding"/>
    <property type="evidence" value="ECO:0007669"/>
    <property type="project" value="InterPro"/>
</dbReference>
<dbReference type="GO" id="GO:0031125">
    <property type="term" value="P:rRNA 3'-end processing"/>
    <property type="evidence" value="ECO:0000318"/>
    <property type="project" value="GO_Central"/>
</dbReference>
<dbReference type="CDD" id="cd06145">
    <property type="entry name" value="REX1_like"/>
    <property type="match status" value="1"/>
</dbReference>
<dbReference type="FunFam" id="3.30.420.10:FF:000021">
    <property type="entry name" value="RNA exonuclease 1 homolog"/>
    <property type="match status" value="1"/>
</dbReference>
<dbReference type="Gene3D" id="3.30.420.10">
    <property type="entry name" value="Ribonuclease H-like superfamily/Ribonuclease H"/>
    <property type="match status" value="1"/>
</dbReference>
<dbReference type="InterPro" id="IPR013520">
    <property type="entry name" value="Exonuclease_RNaseT/DNA_pol3"/>
</dbReference>
<dbReference type="InterPro" id="IPR034922">
    <property type="entry name" value="REX1-like_exo"/>
</dbReference>
<dbReference type="InterPro" id="IPR031736">
    <property type="entry name" value="REXO1-like_dom"/>
</dbReference>
<dbReference type="InterPro" id="IPR047021">
    <property type="entry name" value="REXO1/3/4-like"/>
</dbReference>
<dbReference type="InterPro" id="IPR012337">
    <property type="entry name" value="RNaseH-like_sf"/>
</dbReference>
<dbReference type="InterPro" id="IPR036397">
    <property type="entry name" value="RNaseH_sf"/>
</dbReference>
<dbReference type="PANTHER" id="PTHR12801:SF62">
    <property type="entry name" value="RNA EXONUCLEASE 1 HOMOLOG"/>
    <property type="match status" value="1"/>
</dbReference>
<dbReference type="PANTHER" id="PTHR12801">
    <property type="entry name" value="RNA EXONUCLEASE REXO1 / RECO3 FAMILY MEMBER-RELATED"/>
    <property type="match status" value="1"/>
</dbReference>
<dbReference type="Pfam" id="PF15870">
    <property type="entry name" value="EloA-BP1"/>
    <property type="match status" value="1"/>
</dbReference>
<dbReference type="SMART" id="SM00479">
    <property type="entry name" value="EXOIII"/>
    <property type="match status" value="1"/>
</dbReference>
<dbReference type="SUPFAM" id="SSF53098">
    <property type="entry name" value="Ribonuclease H-like"/>
    <property type="match status" value="1"/>
</dbReference>
<gene>
    <name type="primary">REXO1</name>
    <name type="synonym">ELOABP1</name>
    <name type="synonym">KIAA1138</name>
    <name type="synonym">TCEB3BP1</name>
</gene>
<organism>
    <name type="scientific">Homo sapiens</name>
    <name type="common">Human</name>
    <dbReference type="NCBI Taxonomy" id="9606"/>
    <lineage>
        <taxon>Eukaryota</taxon>
        <taxon>Metazoa</taxon>
        <taxon>Chordata</taxon>
        <taxon>Craniata</taxon>
        <taxon>Vertebrata</taxon>
        <taxon>Euteleostomi</taxon>
        <taxon>Mammalia</taxon>
        <taxon>Eutheria</taxon>
        <taxon>Euarchontoglires</taxon>
        <taxon>Primates</taxon>
        <taxon>Haplorrhini</taxon>
        <taxon>Catarrhini</taxon>
        <taxon>Hominidae</taxon>
        <taxon>Homo</taxon>
    </lineage>
</organism>
<proteinExistence type="evidence at protein level"/>